<sequence>MRKSYRVKTERDFQKVFKEGQSMANRGFVVYTLPKENQKHFRVGISVGKKVGHTAVARNRLKRFIRATLTELKPEIRPDLDFLVIARPYARDFDMGRTKKNLIHVLRLAKVLSSEETEIEEK</sequence>
<accession>Q74H92</accession>
<comment type="function">
    <text evidence="1">RNaseP catalyzes the removal of the 5'-leader sequence from pre-tRNA to produce the mature 5'-terminus. It can also cleave other RNA substrates such as 4.5S RNA. The protein component plays an auxiliary but essential role in vivo by binding to the 5'-leader sequence and broadening the substrate specificity of the ribozyme.</text>
</comment>
<comment type="catalytic activity">
    <reaction evidence="1">
        <text>Endonucleolytic cleavage of RNA, removing 5'-extranucleotides from tRNA precursor.</text>
        <dbReference type="EC" id="3.1.26.5"/>
    </reaction>
</comment>
<comment type="subunit">
    <text evidence="1">Consists of a catalytic RNA component (M1 or rnpB) and a protein subunit.</text>
</comment>
<comment type="similarity">
    <text evidence="1">Belongs to the RnpA family.</text>
</comment>
<keyword id="KW-0255">Endonuclease</keyword>
<keyword id="KW-0378">Hydrolase</keyword>
<keyword id="KW-0540">Nuclease</keyword>
<keyword id="KW-0694">RNA-binding</keyword>
<keyword id="KW-0819">tRNA processing</keyword>
<dbReference type="EC" id="3.1.26.5" evidence="1"/>
<dbReference type="EMBL" id="AE017198">
    <property type="protein sequence ID" value="AAS09801.1"/>
    <property type="molecule type" value="Genomic_DNA"/>
</dbReference>
<dbReference type="RefSeq" id="WP_004898271.1">
    <property type="nucleotide sequence ID" value="NC_005362.1"/>
</dbReference>
<dbReference type="SMR" id="Q74H92"/>
<dbReference type="KEGG" id="ljo:LJ_1857"/>
<dbReference type="eggNOG" id="COG0594">
    <property type="taxonomic scope" value="Bacteria"/>
</dbReference>
<dbReference type="HOGENOM" id="CLU_117179_9_1_9"/>
<dbReference type="Proteomes" id="UP000000581">
    <property type="component" value="Chromosome"/>
</dbReference>
<dbReference type="GO" id="GO:0030677">
    <property type="term" value="C:ribonuclease P complex"/>
    <property type="evidence" value="ECO:0007669"/>
    <property type="project" value="TreeGrafter"/>
</dbReference>
<dbReference type="GO" id="GO:0042781">
    <property type="term" value="F:3'-tRNA processing endoribonuclease activity"/>
    <property type="evidence" value="ECO:0007669"/>
    <property type="project" value="TreeGrafter"/>
</dbReference>
<dbReference type="GO" id="GO:0004526">
    <property type="term" value="F:ribonuclease P activity"/>
    <property type="evidence" value="ECO:0007669"/>
    <property type="project" value="UniProtKB-UniRule"/>
</dbReference>
<dbReference type="GO" id="GO:0000049">
    <property type="term" value="F:tRNA binding"/>
    <property type="evidence" value="ECO:0007669"/>
    <property type="project" value="UniProtKB-UniRule"/>
</dbReference>
<dbReference type="GO" id="GO:0001682">
    <property type="term" value="P:tRNA 5'-leader removal"/>
    <property type="evidence" value="ECO:0007669"/>
    <property type="project" value="UniProtKB-UniRule"/>
</dbReference>
<dbReference type="FunFam" id="3.30.230.10:FF:000021">
    <property type="entry name" value="Ribonuclease P protein component"/>
    <property type="match status" value="1"/>
</dbReference>
<dbReference type="Gene3D" id="3.30.230.10">
    <property type="match status" value="1"/>
</dbReference>
<dbReference type="HAMAP" id="MF_00227">
    <property type="entry name" value="RNase_P"/>
    <property type="match status" value="1"/>
</dbReference>
<dbReference type="InterPro" id="IPR020568">
    <property type="entry name" value="Ribosomal_Su5_D2-typ_SF"/>
</dbReference>
<dbReference type="InterPro" id="IPR014721">
    <property type="entry name" value="Ribsml_uS5_D2-typ_fold_subgr"/>
</dbReference>
<dbReference type="InterPro" id="IPR000100">
    <property type="entry name" value="RNase_P"/>
</dbReference>
<dbReference type="NCBIfam" id="TIGR00188">
    <property type="entry name" value="rnpA"/>
    <property type="match status" value="1"/>
</dbReference>
<dbReference type="PANTHER" id="PTHR33992">
    <property type="entry name" value="RIBONUCLEASE P PROTEIN COMPONENT"/>
    <property type="match status" value="1"/>
</dbReference>
<dbReference type="PANTHER" id="PTHR33992:SF1">
    <property type="entry name" value="RIBONUCLEASE P PROTEIN COMPONENT"/>
    <property type="match status" value="1"/>
</dbReference>
<dbReference type="Pfam" id="PF00825">
    <property type="entry name" value="Ribonuclease_P"/>
    <property type="match status" value="1"/>
</dbReference>
<dbReference type="SUPFAM" id="SSF54211">
    <property type="entry name" value="Ribosomal protein S5 domain 2-like"/>
    <property type="match status" value="1"/>
</dbReference>
<feature type="chain" id="PRO_0000198473" description="Ribonuclease P protein component">
    <location>
        <begin position="1"/>
        <end position="122"/>
    </location>
</feature>
<reference key="1">
    <citation type="journal article" date="2004" name="Proc. Natl. Acad. Sci. U.S.A.">
        <title>The genome sequence of the probiotic intestinal bacterium Lactobacillus johnsonii NCC 533.</title>
        <authorList>
            <person name="Pridmore R.D."/>
            <person name="Berger B."/>
            <person name="Desiere F."/>
            <person name="Vilanova D."/>
            <person name="Barretto C."/>
            <person name="Pittet A.-C."/>
            <person name="Zwahlen M.-C."/>
            <person name="Rouvet M."/>
            <person name="Altermann E."/>
            <person name="Barrangou R."/>
            <person name="Mollet B."/>
            <person name="Mercenier A."/>
            <person name="Klaenhammer T."/>
            <person name="Arigoni F."/>
            <person name="Schell M.A."/>
        </authorList>
    </citation>
    <scope>NUCLEOTIDE SEQUENCE [LARGE SCALE GENOMIC DNA]</scope>
    <source>
        <strain>CNCM I-1225 / La1 / NCC 533</strain>
    </source>
</reference>
<proteinExistence type="inferred from homology"/>
<organism>
    <name type="scientific">Lactobacillus johnsonii (strain CNCM I-12250 / La1 / NCC 533)</name>
    <dbReference type="NCBI Taxonomy" id="257314"/>
    <lineage>
        <taxon>Bacteria</taxon>
        <taxon>Bacillati</taxon>
        <taxon>Bacillota</taxon>
        <taxon>Bacilli</taxon>
        <taxon>Lactobacillales</taxon>
        <taxon>Lactobacillaceae</taxon>
        <taxon>Lactobacillus</taxon>
    </lineage>
</organism>
<gene>
    <name evidence="1" type="primary">rnpA</name>
    <name type="ordered locus">LJ_1857</name>
</gene>
<protein>
    <recommendedName>
        <fullName evidence="1">Ribonuclease P protein component</fullName>
        <shortName evidence="1">RNase P protein</shortName>
        <shortName evidence="1">RNaseP protein</shortName>
        <ecNumber evidence="1">3.1.26.5</ecNumber>
    </recommendedName>
    <alternativeName>
        <fullName evidence="1">Protein C5</fullName>
    </alternativeName>
</protein>
<name>RNPA_LACJO</name>
<evidence type="ECO:0000255" key="1">
    <source>
        <dbReference type="HAMAP-Rule" id="MF_00227"/>
    </source>
</evidence>